<evidence type="ECO:0000255" key="1">
    <source>
        <dbReference type="HAMAP-Rule" id="MF_00001"/>
    </source>
</evidence>
<keyword id="KW-0665">Pyrimidine biosynthesis</keyword>
<keyword id="KW-0808">Transferase</keyword>
<proteinExistence type="inferred from homology"/>
<name>PYRB_BORPA</name>
<gene>
    <name evidence="1" type="primary">pyrB</name>
    <name type="ordered locus">BPP3930</name>
</gene>
<reference key="1">
    <citation type="journal article" date="2003" name="Nat. Genet.">
        <title>Comparative analysis of the genome sequences of Bordetella pertussis, Bordetella parapertussis and Bordetella bronchiseptica.</title>
        <authorList>
            <person name="Parkhill J."/>
            <person name="Sebaihia M."/>
            <person name="Preston A."/>
            <person name="Murphy L.D."/>
            <person name="Thomson N.R."/>
            <person name="Harris D.E."/>
            <person name="Holden M.T.G."/>
            <person name="Churcher C.M."/>
            <person name="Bentley S.D."/>
            <person name="Mungall K.L."/>
            <person name="Cerdeno-Tarraga A.-M."/>
            <person name="Temple L."/>
            <person name="James K.D."/>
            <person name="Harris B."/>
            <person name="Quail M.A."/>
            <person name="Achtman M."/>
            <person name="Atkin R."/>
            <person name="Baker S."/>
            <person name="Basham D."/>
            <person name="Bason N."/>
            <person name="Cherevach I."/>
            <person name="Chillingworth T."/>
            <person name="Collins M."/>
            <person name="Cronin A."/>
            <person name="Davis P."/>
            <person name="Doggett J."/>
            <person name="Feltwell T."/>
            <person name="Goble A."/>
            <person name="Hamlin N."/>
            <person name="Hauser H."/>
            <person name="Holroyd S."/>
            <person name="Jagels K."/>
            <person name="Leather S."/>
            <person name="Moule S."/>
            <person name="Norberczak H."/>
            <person name="O'Neil S."/>
            <person name="Ormond D."/>
            <person name="Price C."/>
            <person name="Rabbinowitsch E."/>
            <person name="Rutter S."/>
            <person name="Sanders M."/>
            <person name="Saunders D."/>
            <person name="Seeger K."/>
            <person name="Sharp S."/>
            <person name="Simmonds M."/>
            <person name="Skelton J."/>
            <person name="Squares R."/>
            <person name="Squares S."/>
            <person name="Stevens K."/>
            <person name="Unwin L."/>
            <person name="Whitehead S."/>
            <person name="Barrell B.G."/>
            <person name="Maskell D.J."/>
        </authorList>
    </citation>
    <scope>NUCLEOTIDE SEQUENCE [LARGE SCALE GENOMIC DNA]</scope>
    <source>
        <strain>12822 / ATCC BAA-587 / NCTC 13253</strain>
    </source>
</reference>
<accession>Q7W3U7</accession>
<feature type="chain" id="PRO_0000113105" description="Aspartate carbamoyltransferase catalytic subunit">
    <location>
        <begin position="1"/>
        <end position="317"/>
    </location>
</feature>
<feature type="binding site" evidence="1">
    <location>
        <position position="65"/>
    </location>
    <ligand>
        <name>carbamoyl phosphate</name>
        <dbReference type="ChEBI" id="CHEBI:58228"/>
    </ligand>
</feature>
<feature type="binding site" evidence="1">
    <location>
        <position position="66"/>
    </location>
    <ligand>
        <name>carbamoyl phosphate</name>
        <dbReference type="ChEBI" id="CHEBI:58228"/>
    </ligand>
</feature>
<feature type="binding site" evidence="1">
    <location>
        <position position="93"/>
    </location>
    <ligand>
        <name>L-aspartate</name>
        <dbReference type="ChEBI" id="CHEBI:29991"/>
    </ligand>
</feature>
<feature type="binding site" evidence="1">
    <location>
        <position position="115"/>
    </location>
    <ligand>
        <name>carbamoyl phosphate</name>
        <dbReference type="ChEBI" id="CHEBI:58228"/>
    </ligand>
</feature>
<feature type="binding site" evidence="1">
    <location>
        <position position="145"/>
    </location>
    <ligand>
        <name>carbamoyl phosphate</name>
        <dbReference type="ChEBI" id="CHEBI:58228"/>
    </ligand>
</feature>
<feature type="binding site" evidence="1">
    <location>
        <position position="148"/>
    </location>
    <ligand>
        <name>carbamoyl phosphate</name>
        <dbReference type="ChEBI" id="CHEBI:58228"/>
    </ligand>
</feature>
<feature type="binding site" evidence="1">
    <location>
        <position position="178"/>
    </location>
    <ligand>
        <name>L-aspartate</name>
        <dbReference type="ChEBI" id="CHEBI:29991"/>
    </ligand>
</feature>
<feature type="binding site" evidence="1">
    <location>
        <position position="233"/>
    </location>
    <ligand>
        <name>L-aspartate</name>
        <dbReference type="ChEBI" id="CHEBI:29991"/>
    </ligand>
</feature>
<feature type="binding site" evidence="1">
    <location>
        <position position="274"/>
    </location>
    <ligand>
        <name>carbamoyl phosphate</name>
        <dbReference type="ChEBI" id="CHEBI:58228"/>
    </ligand>
</feature>
<feature type="binding site" evidence="1">
    <location>
        <position position="275"/>
    </location>
    <ligand>
        <name>carbamoyl phosphate</name>
        <dbReference type="ChEBI" id="CHEBI:58228"/>
    </ligand>
</feature>
<dbReference type="EC" id="2.1.3.2" evidence="1"/>
<dbReference type="EMBL" id="BX640435">
    <property type="protein sequence ID" value="CAE39213.1"/>
    <property type="molecule type" value="Genomic_DNA"/>
</dbReference>
<dbReference type="RefSeq" id="WP_010929313.1">
    <property type="nucleotide sequence ID" value="NC_002928.3"/>
</dbReference>
<dbReference type="SMR" id="Q7W3U7"/>
<dbReference type="GeneID" id="93205729"/>
<dbReference type="KEGG" id="bpa:BPP3930"/>
<dbReference type="HOGENOM" id="CLU_043846_2_0_4"/>
<dbReference type="UniPathway" id="UPA00070">
    <property type="reaction ID" value="UER00116"/>
</dbReference>
<dbReference type="Proteomes" id="UP000001421">
    <property type="component" value="Chromosome"/>
</dbReference>
<dbReference type="GO" id="GO:0005829">
    <property type="term" value="C:cytosol"/>
    <property type="evidence" value="ECO:0007669"/>
    <property type="project" value="TreeGrafter"/>
</dbReference>
<dbReference type="GO" id="GO:0016597">
    <property type="term" value="F:amino acid binding"/>
    <property type="evidence" value="ECO:0007669"/>
    <property type="project" value="InterPro"/>
</dbReference>
<dbReference type="GO" id="GO:0004070">
    <property type="term" value="F:aspartate carbamoyltransferase activity"/>
    <property type="evidence" value="ECO:0007669"/>
    <property type="project" value="UniProtKB-UniRule"/>
</dbReference>
<dbReference type="GO" id="GO:0006207">
    <property type="term" value="P:'de novo' pyrimidine nucleobase biosynthetic process"/>
    <property type="evidence" value="ECO:0007669"/>
    <property type="project" value="InterPro"/>
</dbReference>
<dbReference type="GO" id="GO:0044205">
    <property type="term" value="P:'de novo' UMP biosynthetic process"/>
    <property type="evidence" value="ECO:0007669"/>
    <property type="project" value="UniProtKB-UniRule"/>
</dbReference>
<dbReference type="GO" id="GO:0006520">
    <property type="term" value="P:amino acid metabolic process"/>
    <property type="evidence" value="ECO:0007669"/>
    <property type="project" value="InterPro"/>
</dbReference>
<dbReference type="FunFam" id="3.40.50.1370:FF:000007">
    <property type="entry name" value="Aspartate carbamoyltransferase"/>
    <property type="match status" value="1"/>
</dbReference>
<dbReference type="Gene3D" id="3.40.50.1370">
    <property type="entry name" value="Aspartate/ornithine carbamoyltransferase"/>
    <property type="match status" value="2"/>
</dbReference>
<dbReference type="HAMAP" id="MF_00001">
    <property type="entry name" value="Asp_carb_tr"/>
    <property type="match status" value="1"/>
</dbReference>
<dbReference type="InterPro" id="IPR006132">
    <property type="entry name" value="Asp/Orn_carbamoyltranf_P-bd"/>
</dbReference>
<dbReference type="InterPro" id="IPR006130">
    <property type="entry name" value="Asp/Orn_carbamoylTrfase"/>
</dbReference>
<dbReference type="InterPro" id="IPR036901">
    <property type="entry name" value="Asp/Orn_carbamoylTrfase_sf"/>
</dbReference>
<dbReference type="InterPro" id="IPR002082">
    <property type="entry name" value="Asp_carbamoyltransf"/>
</dbReference>
<dbReference type="InterPro" id="IPR006131">
    <property type="entry name" value="Asp_carbamoyltransf_Asp/Orn-bd"/>
</dbReference>
<dbReference type="NCBIfam" id="TIGR00670">
    <property type="entry name" value="asp_carb_tr"/>
    <property type="match status" value="1"/>
</dbReference>
<dbReference type="NCBIfam" id="NF002032">
    <property type="entry name" value="PRK00856.1"/>
    <property type="match status" value="1"/>
</dbReference>
<dbReference type="PANTHER" id="PTHR45753:SF6">
    <property type="entry name" value="ASPARTATE CARBAMOYLTRANSFERASE"/>
    <property type="match status" value="1"/>
</dbReference>
<dbReference type="PANTHER" id="PTHR45753">
    <property type="entry name" value="ORNITHINE CARBAMOYLTRANSFERASE, MITOCHONDRIAL"/>
    <property type="match status" value="1"/>
</dbReference>
<dbReference type="Pfam" id="PF00185">
    <property type="entry name" value="OTCace"/>
    <property type="match status" value="1"/>
</dbReference>
<dbReference type="Pfam" id="PF02729">
    <property type="entry name" value="OTCace_N"/>
    <property type="match status" value="1"/>
</dbReference>
<dbReference type="PRINTS" id="PR00100">
    <property type="entry name" value="AOTCASE"/>
</dbReference>
<dbReference type="PRINTS" id="PR00101">
    <property type="entry name" value="ATCASE"/>
</dbReference>
<dbReference type="SUPFAM" id="SSF53671">
    <property type="entry name" value="Aspartate/ornithine carbamoyltransferase"/>
    <property type="match status" value="1"/>
</dbReference>
<dbReference type="PROSITE" id="PS00097">
    <property type="entry name" value="CARBAMOYLTRANSFERASE"/>
    <property type="match status" value="1"/>
</dbReference>
<organism>
    <name type="scientific">Bordetella parapertussis (strain 12822 / ATCC BAA-587 / NCTC 13253)</name>
    <dbReference type="NCBI Taxonomy" id="257311"/>
    <lineage>
        <taxon>Bacteria</taxon>
        <taxon>Pseudomonadati</taxon>
        <taxon>Pseudomonadota</taxon>
        <taxon>Betaproteobacteria</taxon>
        <taxon>Burkholderiales</taxon>
        <taxon>Alcaligenaceae</taxon>
        <taxon>Bordetella</taxon>
    </lineage>
</organism>
<comment type="function">
    <text evidence="1">Catalyzes the condensation of carbamoyl phosphate and aspartate to form carbamoyl aspartate and inorganic phosphate, the committed step in the de novo pyrimidine nucleotide biosynthesis pathway.</text>
</comment>
<comment type="catalytic activity">
    <reaction evidence="1">
        <text>carbamoyl phosphate + L-aspartate = N-carbamoyl-L-aspartate + phosphate + H(+)</text>
        <dbReference type="Rhea" id="RHEA:20013"/>
        <dbReference type="ChEBI" id="CHEBI:15378"/>
        <dbReference type="ChEBI" id="CHEBI:29991"/>
        <dbReference type="ChEBI" id="CHEBI:32814"/>
        <dbReference type="ChEBI" id="CHEBI:43474"/>
        <dbReference type="ChEBI" id="CHEBI:58228"/>
        <dbReference type="EC" id="2.1.3.2"/>
    </reaction>
</comment>
<comment type="pathway">
    <text evidence="1">Pyrimidine metabolism; UMP biosynthesis via de novo pathway; (S)-dihydroorotate from bicarbonate: step 2/3.</text>
</comment>
<comment type="subunit">
    <text evidence="1">Heterododecamer (2C3:3R2) of six catalytic PyrB chains organized as two trimers (C3), and six regulatory PyrI chains organized as three dimers (R2).</text>
</comment>
<comment type="similarity">
    <text evidence="1">Belongs to the aspartate/ornithine carbamoyltransferase superfamily. ATCase family.</text>
</comment>
<protein>
    <recommendedName>
        <fullName evidence="1">Aspartate carbamoyltransferase catalytic subunit</fullName>
        <ecNumber evidence="1">2.1.3.2</ecNumber>
    </recommendedName>
    <alternativeName>
        <fullName evidence="1">Aspartate transcarbamylase</fullName>
        <shortName evidence="1">ATCase</shortName>
    </alternativeName>
</protein>
<sequence length="317" mass="34304">MLNPQLNRHGELIHLLSTEGLPRRIIEQILDLAATFVPAPGQEFPKLPLLHGKSVFNLFFENSTRTRTTFEIAAKRLSADVVNLNIAASSTSKGESLLDTIANLSAMQAGLFVVRHGASGAPYLIAQHVAPHVHVINAGDGRHAHPTQALLDMYTIRHHKGDFNQLTVAIVGDVLHSRVARSDIHALTTLGVPEVRVVAPATLLPEGLAQMGVRVCTDMEEGLRDADVVIMLRLQNERMRGALLPSAHEYFKHYGLTQARLALARPDAIVMHPGPMNRGVEIASEVADSGQAVILDQVTFGIAVRMAAMSLVAGVRP</sequence>